<protein>
    <recommendedName>
        <fullName evidence="1">UDP-3-O-acylglucosamine N-acyltransferase</fullName>
        <ecNumber evidence="1">2.3.1.191</ecNumber>
    </recommendedName>
</protein>
<proteinExistence type="inferred from homology"/>
<evidence type="ECO:0000255" key="1">
    <source>
        <dbReference type="HAMAP-Rule" id="MF_00523"/>
    </source>
</evidence>
<accession>Q31B90</accession>
<dbReference type="EC" id="2.3.1.191" evidence="1"/>
<dbReference type="EMBL" id="CP000111">
    <property type="protein sequence ID" value="ABB49855.1"/>
    <property type="molecule type" value="Genomic_DNA"/>
</dbReference>
<dbReference type="RefSeq" id="WP_011376350.1">
    <property type="nucleotide sequence ID" value="NC_007577.1"/>
</dbReference>
<dbReference type="SMR" id="Q31B90"/>
<dbReference type="STRING" id="74546.PMT9312_0795"/>
<dbReference type="KEGG" id="pmi:PMT9312_0795"/>
<dbReference type="eggNOG" id="COG1044">
    <property type="taxonomic scope" value="Bacteria"/>
</dbReference>
<dbReference type="HOGENOM" id="CLU_049865_0_0_3"/>
<dbReference type="OrthoDB" id="9784739at2"/>
<dbReference type="UniPathway" id="UPA00973"/>
<dbReference type="Proteomes" id="UP000002715">
    <property type="component" value="Chromosome"/>
</dbReference>
<dbReference type="GO" id="GO:0031470">
    <property type="term" value="C:carboxysome"/>
    <property type="evidence" value="ECO:0007669"/>
    <property type="project" value="UniProtKB-ARBA"/>
</dbReference>
<dbReference type="GO" id="GO:0016020">
    <property type="term" value="C:membrane"/>
    <property type="evidence" value="ECO:0007669"/>
    <property type="project" value="GOC"/>
</dbReference>
<dbReference type="GO" id="GO:0016410">
    <property type="term" value="F:N-acyltransferase activity"/>
    <property type="evidence" value="ECO:0007669"/>
    <property type="project" value="InterPro"/>
</dbReference>
<dbReference type="GO" id="GO:0043886">
    <property type="term" value="F:structural constituent of carboxysome shell"/>
    <property type="evidence" value="ECO:0007669"/>
    <property type="project" value="UniProtKB-ARBA"/>
</dbReference>
<dbReference type="GO" id="GO:0009245">
    <property type="term" value="P:lipid A biosynthetic process"/>
    <property type="evidence" value="ECO:0007669"/>
    <property type="project" value="UniProtKB-UniRule"/>
</dbReference>
<dbReference type="CDD" id="cd03352">
    <property type="entry name" value="LbH_LpxD"/>
    <property type="match status" value="1"/>
</dbReference>
<dbReference type="Gene3D" id="2.160.10.10">
    <property type="entry name" value="Hexapeptide repeat proteins"/>
    <property type="match status" value="1"/>
</dbReference>
<dbReference type="Gene3D" id="3.40.1390.10">
    <property type="entry name" value="MurE/MurF, N-terminal domain"/>
    <property type="match status" value="1"/>
</dbReference>
<dbReference type="HAMAP" id="MF_00523">
    <property type="entry name" value="LpxD"/>
    <property type="match status" value="1"/>
</dbReference>
<dbReference type="InterPro" id="IPR001451">
    <property type="entry name" value="Hexapep"/>
</dbReference>
<dbReference type="InterPro" id="IPR007691">
    <property type="entry name" value="LpxD"/>
</dbReference>
<dbReference type="InterPro" id="IPR011004">
    <property type="entry name" value="Trimer_LpxA-like_sf"/>
</dbReference>
<dbReference type="InterPro" id="IPR020573">
    <property type="entry name" value="UDP_GlcNAc_AcTrfase_non-rep"/>
</dbReference>
<dbReference type="NCBIfam" id="TIGR01853">
    <property type="entry name" value="lipid_A_lpxD"/>
    <property type="match status" value="1"/>
</dbReference>
<dbReference type="NCBIfam" id="NF002060">
    <property type="entry name" value="PRK00892.1"/>
    <property type="match status" value="1"/>
</dbReference>
<dbReference type="PANTHER" id="PTHR43378">
    <property type="entry name" value="UDP-3-O-ACYLGLUCOSAMINE N-ACYLTRANSFERASE"/>
    <property type="match status" value="1"/>
</dbReference>
<dbReference type="PANTHER" id="PTHR43378:SF2">
    <property type="entry name" value="UDP-3-O-ACYLGLUCOSAMINE N-ACYLTRANSFERASE 1, MITOCHONDRIAL-RELATED"/>
    <property type="match status" value="1"/>
</dbReference>
<dbReference type="Pfam" id="PF00132">
    <property type="entry name" value="Hexapep"/>
    <property type="match status" value="3"/>
</dbReference>
<dbReference type="Pfam" id="PF04613">
    <property type="entry name" value="LpxD"/>
    <property type="match status" value="1"/>
</dbReference>
<dbReference type="SUPFAM" id="SSF51161">
    <property type="entry name" value="Trimeric LpxA-like enzymes"/>
    <property type="match status" value="1"/>
</dbReference>
<feature type="chain" id="PRO_0000264407" description="UDP-3-O-acylglucosamine N-acyltransferase">
    <location>
        <begin position="1"/>
        <end position="344"/>
    </location>
</feature>
<feature type="active site" description="Proton acceptor" evidence="1">
    <location>
        <position position="248"/>
    </location>
</feature>
<comment type="function">
    <text evidence="1">Catalyzes the N-acylation of UDP-3-O-acylglucosamine using 3-hydroxyacyl-ACP as the acyl donor. Is involved in the biosynthesis of lipid A, a phosphorylated glycolipid that anchors the lipopolysaccharide to the outer membrane of the cell.</text>
</comment>
<comment type="catalytic activity">
    <reaction evidence="1">
        <text>a UDP-3-O-[(3R)-3-hydroxyacyl]-alpha-D-glucosamine + a (3R)-hydroxyacyl-[ACP] = a UDP-2-N,3-O-bis[(3R)-3-hydroxyacyl]-alpha-D-glucosamine + holo-[ACP] + H(+)</text>
        <dbReference type="Rhea" id="RHEA:53836"/>
        <dbReference type="Rhea" id="RHEA-COMP:9685"/>
        <dbReference type="Rhea" id="RHEA-COMP:9945"/>
        <dbReference type="ChEBI" id="CHEBI:15378"/>
        <dbReference type="ChEBI" id="CHEBI:64479"/>
        <dbReference type="ChEBI" id="CHEBI:78827"/>
        <dbReference type="ChEBI" id="CHEBI:137740"/>
        <dbReference type="ChEBI" id="CHEBI:137748"/>
        <dbReference type="EC" id="2.3.1.191"/>
    </reaction>
</comment>
<comment type="pathway">
    <text evidence="1">Bacterial outer membrane biogenesis; LPS lipid A biosynthesis.</text>
</comment>
<comment type="subunit">
    <text evidence="1">Homotrimer.</text>
</comment>
<comment type="similarity">
    <text evidence="1">Belongs to the transferase hexapeptide repeat family. LpxD subfamily.</text>
</comment>
<organism>
    <name type="scientific">Prochlorococcus marinus (strain MIT 9312)</name>
    <dbReference type="NCBI Taxonomy" id="74546"/>
    <lineage>
        <taxon>Bacteria</taxon>
        <taxon>Bacillati</taxon>
        <taxon>Cyanobacteriota</taxon>
        <taxon>Cyanophyceae</taxon>
        <taxon>Synechococcales</taxon>
        <taxon>Prochlorococcaceae</taxon>
        <taxon>Prochlorococcus</taxon>
    </lineage>
</organism>
<sequence>MLLSDLVDLIKKGNSNFISSNIFEDLNIEDAASLDEAVNHQISFLEENNILKEKLDKSNASAIITSNNNEIISALKKLNISNIIVKNPRIAFAEVLNHLYKTINFNPGIHASAVIDKTAIIGADCHIGPNVYIGENTVIGNNNDILTGSSILGNVRIGDNNIIHPNCVVYENTTLKNNCVINSNSVIGSEGFGFIPKDDKWVKMPQKGGVKIMSFVEIGTNCCIDRPAVGITFIDEGTKLDNLVQIGHGVKIGKNCAFAAQVGIAGGAKIGDRVILAGQVGVNNRVKVGNNVIASSKCGIHCDIEDGKVISGFPAMENKSWLRSSSIFKKLPELAKKLRQLDKQ</sequence>
<name>LPXD_PROM9</name>
<reference key="1">
    <citation type="journal article" date="2006" name="Science">
        <title>Genomic islands and the ecology and evolution of Prochlorococcus.</title>
        <authorList>
            <person name="Coleman M.L."/>
            <person name="Sullivan M.B."/>
            <person name="Martiny A.C."/>
            <person name="Steglich C."/>
            <person name="Barry K."/>
            <person name="Delong E.F."/>
            <person name="Chisholm S.W."/>
        </authorList>
    </citation>
    <scope>NUCLEOTIDE SEQUENCE [LARGE SCALE GENOMIC DNA]</scope>
    <source>
        <strain>MIT 9312</strain>
    </source>
</reference>
<keyword id="KW-0012">Acyltransferase</keyword>
<keyword id="KW-0441">Lipid A biosynthesis</keyword>
<keyword id="KW-0444">Lipid biosynthesis</keyword>
<keyword id="KW-0443">Lipid metabolism</keyword>
<keyword id="KW-0677">Repeat</keyword>
<keyword id="KW-0808">Transferase</keyword>
<gene>
    <name evidence="1" type="primary">lpxD</name>
    <name type="ordered locus">PMT9312_0795</name>
</gene>